<sequence>MKVGVIMGGISSEREISIQSGNSVVHALDKDKYEAIPIVLNEKEDLIEKVKGIDFALLALHGKFGEDGTVQSVLKTLGIPFSGCGPLSSAICMDKDMTKRILAFGNVRTARWEMVSSVDEIDYEKIENLGYPVFVKPNNGGSSVATTLVESKEAVKDAVLEALKYDTEVMIEEYIKGDEITCPIIDGKMLPVLAIKPKGKFFDIASKYGDGGADEFIVELNEDLHKEVEKMALETYKLLKCDVYARVDMLVKDNIPYVLEVNTLPGMTKNSLFPKSAAGINMSFEELLDTIIEKSLKVNRE</sequence>
<dbReference type="EC" id="6.3.2.4" evidence="2"/>
<dbReference type="EMBL" id="BA000016">
    <property type="protein sequence ID" value="BAB81021.1"/>
    <property type="molecule type" value="Genomic_DNA"/>
</dbReference>
<dbReference type="RefSeq" id="WP_011010382.1">
    <property type="nucleotide sequence ID" value="NC_003366.1"/>
</dbReference>
<dbReference type="SMR" id="Q8XKS9"/>
<dbReference type="STRING" id="195102.gene:10490578"/>
<dbReference type="KEGG" id="cpe:CPE1315"/>
<dbReference type="HOGENOM" id="CLU_039268_1_1_9"/>
<dbReference type="UniPathway" id="UPA00219"/>
<dbReference type="Proteomes" id="UP000000818">
    <property type="component" value="Chromosome"/>
</dbReference>
<dbReference type="GO" id="GO:0005737">
    <property type="term" value="C:cytoplasm"/>
    <property type="evidence" value="ECO:0007669"/>
    <property type="project" value="UniProtKB-SubCell"/>
</dbReference>
<dbReference type="GO" id="GO:0005524">
    <property type="term" value="F:ATP binding"/>
    <property type="evidence" value="ECO:0007669"/>
    <property type="project" value="UniProtKB-KW"/>
</dbReference>
<dbReference type="GO" id="GO:0008716">
    <property type="term" value="F:D-alanine-D-alanine ligase activity"/>
    <property type="evidence" value="ECO:0007669"/>
    <property type="project" value="UniProtKB-UniRule"/>
</dbReference>
<dbReference type="GO" id="GO:0046872">
    <property type="term" value="F:metal ion binding"/>
    <property type="evidence" value="ECO:0007669"/>
    <property type="project" value="UniProtKB-KW"/>
</dbReference>
<dbReference type="GO" id="GO:0071555">
    <property type="term" value="P:cell wall organization"/>
    <property type="evidence" value="ECO:0007669"/>
    <property type="project" value="UniProtKB-KW"/>
</dbReference>
<dbReference type="GO" id="GO:0009252">
    <property type="term" value="P:peptidoglycan biosynthetic process"/>
    <property type="evidence" value="ECO:0007669"/>
    <property type="project" value="UniProtKB-UniRule"/>
</dbReference>
<dbReference type="GO" id="GO:0008360">
    <property type="term" value="P:regulation of cell shape"/>
    <property type="evidence" value="ECO:0007669"/>
    <property type="project" value="UniProtKB-KW"/>
</dbReference>
<dbReference type="FunFam" id="3.40.50.20:FF:000031">
    <property type="entry name" value="D-alanine--D-alanine ligase"/>
    <property type="match status" value="1"/>
</dbReference>
<dbReference type="Gene3D" id="3.40.50.20">
    <property type="match status" value="1"/>
</dbReference>
<dbReference type="Gene3D" id="3.30.1490.20">
    <property type="entry name" value="ATP-grasp fold, A domain"/>
    <property type="match status" value="1"/>
</dbReference>
<dbReference type="Gene3D" id="3.30.470.20">
    <property type="entry name" value="ATP-grasp fold, B domain"/>
    <property type="match status" value="1"/>
</dbReference>
<dbReference type="HAMAP" id="MF_00047">
    <property type="entry name" value="Dala_Dala_lig"/>
    <property type="match status" value="1"/>
</dbReference>
<dbReference type="InterPro" id="IPR011761">
    <property type="entry name" value="ATP-grasp"/>
</dbReference>
<dbReference type="InterPro" id="IPR013815">
    <property type="entry name" value="ATP_grasp_subdomain_1"/>
</dbReference>
<dbReference type="InterPro" id="IPR000291">
    <property type="entry name" value="D-Ala_lig_Van_CS"/>
</dbReference>
<dbReference type="InterPro" id="IPR005905">
    <property type="entry name" value="D_ala_D_ala"/>
</dbReference>
<dbReference type="InterPro" id="IPR011095">
    <property type="entry name" value="Dala_Dala_lig_C"/>
</dbReference>
<dbReference type="InterPro" id="IPR011127">
    <property type="entry name" value="Dala_Dala_lig_N"/>
</dbReference>
<dbReference type="InterPro" id="IPR016185">
    <property type="entry name" value="PreATP-grasp_dom_sf"/>
</dbReference>
<dbReference type="NCBIfam" id="TIGR01205">
    <property type="entry name" value="D_ala_D_alaTIGR"/>
    <property type="match status" value="1"/>
</dbReference>
<dbReference type="NCBIfam" id="NF002378">
    <property type="entry name" value="PRK01372.1"/>
    <property type="match status" value="1"/>
</dbReference>
<dbReference type="PANTHER" id="PTHR23132">
    <property type="entry name" value="D-ALANINE--D-ALANINE LIGASE"/>
    <property type="match status" value="1"/>
</dbReference>
<dbReference type="PANTHER" id="PTHR23132:SF23">
    <property type="entry name" value="D-ALANINE--D-ALANINE LIGASE B"/>
    <property type="match status" value="1"/>
</dbReference>
<dbReference type="Pfam" id="PF07478">
    <property type="entry name" value="Dala_Dala_lig_C"/>
    <property type="match status" value="1"/>
</dbReference>
<dbReference type="Pfam" id="PF01820">
    <property type="entry name" value="Dala_Dala_lig_N"/>
    <property type="match status" value="1"/>
</dbReference>
<dbReference type="PIRSF" id="PIRSF039102">
    <property type="entry name" value="Ddl/VanB"/>
    <property type="match status" value="1"/>
</dbReference>
<dbReference type="SUPFAM" id="SSF56059">
    <property type="entry name" value="Glutathione synthetase ATP-binding domain-like"/>
    <property type="match status" value="1"/>
</dbReference>
<dbReference type="SUPFAM" id="SSF52440">
    <property type="entry name" value="PreATP-grasp domain"/>
    <property type="match status" value="1"/>
</dbReference>
<dbReference type="PROSITE" id="PS50975">
    <property type="entry name" value="ATP_GRASP"/>
    <property type="match status" value="1"/>
</dbReference>
<dbReference type="PROSITE" id="PS00843">
    <property type="entry name" value="DALA_DALA_LIGASE_1"/>
    <property type="match status" value="1"/>
</dbReference>
<dbReference type="PROSITE" id="PS00844">
    <property type="entry name" value="DALA_DALA_LIGASE_2"/>
    <property type="match status" value="1"/>
</dbReference>
<name>DDLA_CLOPE</name>
<comment type="function">
    <text evidence="2">Cell wall formation.</text>
</comment>
<comment type="catalytic activity">
    <reaction evidence="2">
        <text>2 D-alanine + ATP = D-alanyl-D-alanine + ADP + phosphate + H(+)</text>
        <dbReference type="Rhea" id="RHEA:11224"/>
        <dbReference type="ChEBI" id="CHEBI:15378"/>
        <dbReference type="ChEBI" id="CHEBI:30616"/>
        <dbReference type="ChEBI" id="CHEBI:43474"/>
        <dbReference type="ChEBI" id="CHEBI:57416"/>
        <dbReference type="ChEBI" id="CHEBI:57822"/>
        <dbReference type="ChEBI" id="CHEBI:456216"/>
        <dbReference type="EC" id="6.3.2.4"/>
    </reaction>
</comment>
<comment type="cofactor">
    <cofactor evidence="1">
        <name>Mg(2+)</name>
        <dbReference type="ChEBI" id="CHEBI:18420"/>
    </cofactor>
    <cofactor evidence="1">
        <name>Mn(2+)</name>
        <dbReference type="ChEBI" id="CHEBI:29035"/>
    </cofactor>
    <text evidence="1">Binds 2 magnesium or manganese ions per subunit.</text>
</comment>
<comment type="pathway">
    <text evidence="2">Cell wall biogenesis; peptidoglycan biosynthesis.</text>
</comment>
<comment type="subcellular location">
    <subcellularLocation>
        <location evidence="2">Cytoplasm</location>
    </subcellularLocation>
</comment>
<comment type="similarity">
    <text evidence="2">Belongs to the D-alanine--D-alanine ligase family.</text>
</comment>
<evidence type="ECO:0000250" key="1"/>
<evidence type="ECO:0000255" key="2">
    <source>
        <dbReference type="HAMAP-Rule" id="MF_00047"/>
    </source>
</evidence>
<accession>Q8XKS9</accession>
<reference key="1">
    <citation type="journal article" date="2002" name="Proc. Natl. Acad. Sci. U.S.A.">
        <title>Complete genome sequence of Clostridium perfringens, an anaerobic flesh-eater.</title>
        <authorList>
            <person name="Shimizu T."/>
            <person name="Ohtani K."/>
            <person name="Hirakawa H."/>
            <person name="Ohshima K."/>
            <person name="Yamashita A."/>
            <person name="Shiba T."/>
            <person name="Ogasawara N."/>
            <person name="Hattori M."/>
            <person name="Kuhara S."/>
            <person name="Hayashi H."/>
        </authorList>
    </citation>
    <scope>NUCLEOTIDE SEQUENCE [LARGE SCALE GENOMIC DNA]</scope>
    <source>
        <strain>13 / Type A</strain>
    </source>
</reference>
<protein>
    <recommendedName>
        <fullName evidence="2">D-alanine--D-alanine ligase A</fullName>
        <ecNumber evidence="2">6.3.2.4</ecNumber>
    </recommendedName>
    <alternativeName>
        <fullName evidence="2">D-Ala-D-Ala ligase A</fullName>
    </alternativeName>
    <alternativeName>
        <fullName evidence="2">D-alanylalanine synthetase A</fullName>
    </alternativeName>
</protein>
<organism>
    <name type="scientific">Clostridium perfringens (strain 13 / Type A)</name>
    <dbReference type="NCBI Taxonomy" id="195102"/>
    <lineage>
        <taxon>Bacteria</taxon>
        <taxon>Bacillati</taxon>
        <taxon>Bacillota</taxon>
        <taxon>Clostridia</taxon>
        <taxon>Eubacteriales</taxon>
        <taxon>Clostridiaceae</taxon>
        <taxon>Clostridium</taxon>
    </lineage>
</organism>
<keyword id="KW-0067">ATP-binding</keyword>
<keyword id="KW-0133">Cell shape</keyword>
<keyword id="KW-0961">Cell wall biogenesis/degradation</keyword>
<keyword id="KW-0963">Cytoplasm</keyword>
<keyword id="KW-0436">Ligase</keyword>
<keyword id="KW-0460">Magnesium</keyword>
<keyword id="KW-0464">Manganese</keyword>
<keyword id="KW-0479">Metal-binding</keyword>
<keyword id="KW-0547">Nucleotide-binding</keyword>
<keyword id="KW-0573">Peptidoglycan synthesis</keyword>
<keyword id="KW-1185">Reference proteome</keyword>
<proteinExistence type="inferred from homology"/>
<feature type="chain" id="PRO_0000177807" description="D-alanine--D-alanine ligase A">
    <location>
        <begin position="1"/>
        <end position="301"/>
    </location>
</feature>
<feature type="domain" description="ATP-grasp" evidence="2">
    <location>
        <begin position="99"/>
        <end position="293"/>
    </location>
</feature>
<feature type="binding site" evidence="2">
    <location>
        <begin position="126"/>
        <end position="181"/>
    </location>
    <ligand>
        <name>ATP</name>
        <dbReference type="ChEBI" id="CHEBI:30616"/>
    </ligand>
</feature>
<feature type="binding site" evidence="2">
    <location>
        <position position="248"/>
    </location>
    <ligand>
        <name>Mg(2+)</name>
        <dbReference type="ChEBI" id="CHEBI:18420"/>
        <label>1</label>
    </ligand>
</feature>
<feature type="binding site" evidence="2">
    <location>
        <position position="260"/>
    </location>
    <ligand>
        <name>Mg(2+)</name>
        <dbReference type="ChEBI" id="CHEBI:18420"/>
        <label>1</label>
    </ligand>
</feature>
<feature type="binding site" evidence="2">
    <location>
        <position position="260"/>
    </location>
    <ligand>
        <name>Mg(2+)</name>
        <dbReference type="ChEBI" id="CHEBI:18420"/>
        <label>2</label>
    </ligand>
</feature>
<feature type="binding site" evidence="2">
    <location>
        <position position="262"/>
    </location>
    <ligand>
        <name>Mg(2+)</name>
        <dbReference type="ChEBI" id="CHEBI:18420"/>
        <label>2</label>
    </ligand>
</feature>
<gene>
    <name evidence="2" type="primary">ddlA</name>
    <name type="ordered locus">CPE1315</name>
</gene>